<feature type="signal peptide" evidence="1">
    <location>
        <begin position="1"/>
        <end position="24"/>
    </location>
</feature>
<feature type="chain" id="PRO_0000282406" description="Coiled-coil domain-containing protein 107">
    <location>
        <begin position="25"/>
        <end position="258"/>
    </location>
</feature>
<feature type="transmembrane region" description="Helical" evidence="1">
    <location>
        <begin position="66"/>
        <end position="86"/>
    </location>
</feature>
<feature type="region of interest" description="Disordered" evidence="2">
    <location>
        <begin position="25"/>
        <end position="63"/>
    </location>
</feature>
<feature type="region of interest" description="Disordered" evidence="2">
    <location>
        <begin position="203"/>
        <end position="222"/>
    </location>
</feature>
<feature type="coiled-coil region" evidence="1">
    <location>
        <begin position="106"/>
        <end position="134"/>
    </location>
</feature>
<feature type="compositionally biased region" description="Basic and acidic residues" evidence="2">
    <location>
        <begin position="25"/>
        <end position="35"/>
    </location>
</feature>
<accession>Q2NL23</accession>
<comment type="subcellular location">
    <subcellularLocation>
        <location evidence="3">Membrane</location>
        <topology evidence="3">Single-pass membrane protein</topology>
    </subcellularLocation>
</comment>
<dbReference type="EMBL" id="BC111180">
    <property type="protein sequence ID" value="AAI11181.1"/>
    <property type="molecule type" value="mRNA"/>
</dbReference>
<dbReference type="RefSeq" id="NP_001069149.1">
    <property type="nucleotide sequence ID" value="NM_001075681.2"/>
</dbReference>
<dbReference type="SMR" id="Q2NL23"/>
<dbReference type="FunCoup" id="Q2NL23">
    <property type="interactions" value="26"/>
</dbReference>
<dbReference type="STRING" id="9913.ENSBTAP00000015165"/>
<dbReference type="PaxDb" id="9913-ENSBTAP00000015165"/>
<dbReference type="Ensembl" id="ENSBTAT00000131280.1">
    <property type="protein sequence ID" value="ENSBTAP00000089924.1"/>
    <property type="gene ID" value="ENSBTAG00000011413.6"/>
</dbReference>
<dbReference type="GeneID" id="514786"/>
<dbReference type="KEGG" id="bta:514786"/>
<dbReference type="CTD" id="203260"/>
<dbReference type="VEuPathDB" id="HostDB:ENSBTAG00000011413"/>
<dbReference type="VGNC" id="VGNC:26832">
    <property type="gene designation" value="CCDC107"/>
</dbReference>
<dbReference type="eggNOG" id="ENOG502QQ24">
    <property type="taxonomic scope" value="Eukaryota"/>
</dbReference>
<dbReference type="GeneTree" id="ENSGT00390000018608"/>
<dbReference type="HOGENOM" id="CLU_097023_0_0_1"/>
<dbReference type="InParanoid" id="Q2NL23"/>
<dbReference type="OMA" id="NQAWEEP"/>
<dbReference type="OrthoDB" id="9904035at2759"/>
<dbReference type="TreeFam" id="TF333319"/>
<dbReference type="Proteomes" id="UP000009136">
    <property type="component" value="Chromosome 8"/>
</dbReference>
<dbReference type="Bgee" id="ENSBTAG00000011413">
    <property type="expression patterns" value="Expressed in trachea and 105 other cell types or tissues"/>
</dbReference>
<dbReference type="GO" id="GO:0016020">
    <property type="term" value="C:membrane"/>
    <property type="evidence" value="ECO:0007669"/>
    <property type="project" value="UniProtKB-SubCell"/>
</dbReference>
<dbReference type="InterPro" id="IPR038779">
    <property type="entry name" value="CCDC107"/>
</dbReference>
<dbReference type="PANTHER" id="PTHR37345">
    <property type="entry name" value="COILED-COIL DOMAIN-CONTAINING PROTEIN 107"/>
    <property type="match status" value="1"/>
</dbReference>
<dbReference type="PANTHER" id="PTHR37345:SF1">
    <property type="entry name" value="COILED-COIL DOMAIN-CONTAINING PROTEIN 107"/>
    <property type="match status" value="1"/>
</dbReference>
<evidence type="ECO:0000255" key="1"/>
<evidence type="ECO:0000256" key="2">
    <source>
        <dbReference type="SAM" id="MobiDB-lite"/>
    </source>
</evidence>
<evidence type="ECO:0000305" key="3"/>
<keyword id="KW-0175">Coiled coil</keyword>
<keyword id="KW-0472">Membrane</keyword>
<keyword id="KW-1185">Reference proteome</keyword>
<keyword id="KW-0732">Signal</keyword>
<keyword id="KW-0812">Transmembrane</keyword>
<keyword id="KW-1133">Transmembrane helix</keyword>
<proteinExistence type="evidence at transcript level"/>
<gene>
    <name type="primary">CCDC107</name>
</gene>
<reference key="1">
    <citation type="submission" date="2005-12" db="EMBL/GenBank/DDBJ databases">
        <authorList>
            <consortium name="NIH - Mammalian Gene Collection (MGC) project"/>
        </authorList>
    </citation>
    <scope>NUCLEOTIDE SEQUENCE [LARGE SCALE MRNA]</scope>
    <source>
        <strain>Crossbred X Angus</strain>
        <tissue>Liver</tissue>
    </source>
</reference>
<organism>
    <name type="scientific">Bos taurus</name>
    <name type="common">Bovine</name>
    <dbReference type="NCBI Taxonomy" id="9913"/>
    <lineage>
        <taxon>Eukaryota</taxon>
        <taxon>Metazoa</taxon>
        <taxon>Chordata</taxon>
        <taxon>Craniata</taxon>
        <taxon>Vertebrata</taxon>
        <taxon>Euteleostomi</taxon>
        <taxon>Mammalia</taxon>
        <taxon>Eutheria</taxon>
        <taxon>Laurasiatheria</taxon>
        <taxon>Artiodactyla</taxon>
        <taxon>Ruminantia</taxon>
        <taxon>Pecora</taxon>
        <taxon>Bovidae</taxon>
        <taxon>Bovinae</taxon>
        <taxon>Bos</taxon>
    </lineage>
</organism>
<name>CC107_BOVIN</name>
<protein>
    <recommendedName>
        <fullName>Coiled-coil domain-containing protein 107</fullName>
    </recommendedName>
</protein>
<sequence length="258" mass="28441">MASVVSLAGTLGLLLVSALPEVLGDRRSPDRRAHPGDAGQVGPAAAEPRRQSPPSKNQRERARSGALPLGALYTAAAVAFVLYKCLQQGKDEAAVLQEEADKKDSLQSEQHLAQLTQQLVQTEQHLNSLMAQLDPLFERVTTLAGAQQELLHMKLQTIHQLLQDSKPNKGVEVPEPEASIPFLEDFCIEEDEEEAGDNQAWEEPLNWNTGTRNLTPPREMQPTLRRRCRKSAAQGLSHSPHWKEGKTVDGLVKQSLFL</sequence>